<name>HEM3_LISIN</name>
<organism>
    <name type="scientific">Listeria innocua serovar 6a (strain ATCC BAA-680 / CLIP 11262)</name>
    <dbReference type="NCBI Taxonomy" id="272626"/>
    <lineage>
        <taxon>Bacteria</taxon>
        <taxon>Bacillati</taxon>
        <taxon>Bacillota</taxon>
        <taxon>Bacilli</taxon>
        <taxon>Bacillales</taxon>
        <taxon>Listeriaceae</taxon>
        <taxon>Listeria</taxon>
    </lineage>
</organism>
<sequence length="309" mass="33662">MKRKIIVGSRRSKLALTQSNWVIKKLKENYPEIDFEIKEIVTKGDRILDVTLSKVGGKGLFVSEVEQALSDEVIDFAVHSMKDVPSSLKDGLVIGAIPKRESPLDCFVFNEVSTLDDLPKGAVIGTSSLRRAAQLLKHRPDFVVKPIRGNIDTRLQKLHAENFDAIILAKAGLARMGWLENTSLKLEDISPELCLPAVGQGALAIECRETDLQICDMLASIHHEETGICVEAERVFLKKLNGGCEIPIAGFATKTGDSVHFKGLVGNADGSIILESERTGASPAEIGNQVAEELLSEGADTIIKELRNI</sequence>
<reference key="1">
    <citation type="journal article" date="2001" name="Science">
        <title>Comparative genomics of Listeria species.</title>
        <authorList>
            <person name="Glaser P."/>
            <person name="Frangeul L."/>
            <person name="Buchrieser C."/>
            <person name="Rusniok C."/>
            <person name="Amend A."/>
            <person name="Baquero F."/>
            <person name="Berche P."/>
            <person name="Bloecker H."/>
            <person name="Brandt P."/>
            <person name="Chakraborty T."/>
            <person name="Charbit A."/>
            <person name="Chetouani F."/>
            <person name="Couve E."/>
            <person name="de Daruvar A."/>
            <person name="Dehoux P."/>
            <person name="Domann E."/>
            <person name="Dominguez-Bernal G."/>
            <person name="Duchaud E."/>
            <person name="Durant L."/>
            <person name="Dussurget O."/>
            <person name="Entian K.-D."/>
            <person name="Fsihi H."/>
            <person name="Garcia-del Portillo F."/>
            <person name="Garrido P."/>
            <person name="Gautier L."/>
            <person name="Goebel W."/>
            <person name="Gomez-Lopez N."/>
            <person name="Hain T."/>
            <person name="Hauf J."/>
            <person name="Jackson D."/>
            <person name="Jones L.-M."/>
            <person name="Kaerst U."/>
            <person name="Kreft J."/>
            <person name="Kuhn M."/>
            <person name="Kunst F."/>
            <person name="Kurapkat G."/>
            <person name="Madueno E."/>
            <person name="Maitournam A."/>
            <person name="Mata Vicente J."/>
            <person name="Ng E."/>
            <person name="Nedjari H."/>
            <person name="Nordsiek G."/>
            <person name="Novella S."/>
            <person name="de Pablos B."/>
            <person name="Perez-Diaz J.-C."/>
            <person name="Purcell R."/>
            <person name="Remmel B."/>
            <person name="Rose M."/>
            <person name="Schlueter T."/>
            <person name="Simoes N."/>
            <person name="Tierrez A."/>
            <person name="Vazquez-Boland J.-A."/>
            <person name="Voss H."/>
            <person name="Wehland J."/>
            <person name="Cossart P."/>
        </authorList>
    </citation>
    <scope>NUCLEOTIDE SEQUENCE [LARGE SCALE GENOMIC DNA]</scope>
    <source>
        <strain>ATCC BAA-680 / CLIP 11262</strain>
    </source>
</reference>
<dbReference type="EC" id="2.5.1.61" evidence="1"/>
<dbReference type="EMBL" id="AL596169">
    <property type="protein sequence ID" value="CAC96822.1"/>
    <property type="molecule type" value="Genomic_DNA"/>
</dbReference>
<dbReference type="PIR" id="AF1631">
    <property type="entry name" value="AF1631"/>
</dbReference>
<dbReference type="RefSeq" id="WP_003762431.1">
    <property type="nucleotide sequence ID" value="NC_003212.1"/>
</dbReference>
<dbReference type="SMR" id="Q92BF8"/>
<dbReference type="STRING" id="272626.gene:17565922"/>
<dbReference type="KEGG" id="lin:hemC"/>
<dbReference type="eggNOG" id="COG0181">
    <property type="taxonomic scope" value="Bacteria"/>
</dbReference>
<dbReference type="HOGENOM" id="CLU_019704_0_2_9"/>
<dbReference type="OrthoDB" id="9810298at2"/>
<dbReference type="UniPathway" id="UPA00251">
    <property type="reaction ID" value="UER00319"/>
</dbReference>
<dbReference type="Proteomes" id="UP000002513">
    <property type="component" value="Chromosome"/>
</dbReference>
<dbReference type="GO" id="GO:0005737">
    <property type="term" value="C:cytoplasm"/>
    <property type="evidence" value="ECO:0007669"/>
    <property type="project" value="TreeGrafter"/>
</dbReference>
<dbReference type="GO" id="GO:0004418">
    <property type="term" value="F:hydroxymethylbilane synthase activity"/>
    <property type="evidence" value="ECO:0007669"/>
    <property type="project" value="UniProtKB-UniRule"/>
</dbReference>
<dbReference type="GO" id="GO:0006782">
    <property type="term" value="P:protoporphyrinogen IX biosynthetic process"/>
    <property type="evidence" value="ECO:0007669"/>
    <property type="project" value="UniProtKB-UniRule"/>
</dbReference>
<dbReference type="CDD" id="cd13646">
    <property type="entry name" value="PBP2_EcHMBS_like"/>
    <property type="match status" value="1"/>
</dbReference>
<dbReference type="FunFam" id="3.30.160.40:FF:000001">
    <property type="entry name" value="Porphobilinogen deaminase"/>
    <property type="match status" value="1"/>
</dbReference>
<dbReference type="FunFam" id="3.40.190.10:FF:000004">
    <property type="entry name" value="Porphobilinogen deaminase"/>
    <property type="match status" value="1"/>
</dbReference>
<dbReference type="FunFam" id="3.40.190.10:FF:000005">
    <property type="entry name" value="Porphobilinogen deaminase"/>
    <property type="match status" value="1"/>
</dbReference>
<dbReference type="Gene3D" id="3.40.190.10">
    <property type="entry name" value="Periplasmic binding protein-like II"/>
    <property type="match status" value="2"/>
</dbReference>
<dbReference type="Gene3D" id="3.30.160.40">
    <property type="entry name" value="Porphobilinogen deaminase, C-terminal domain"/>
    <property type="match status" value="1"/>
</dbReference>
<dbReference type="HAMAP" id="MF_00260">
    <property type="entry name" value="Porphobil_deam"/>
    <property type="match status" value="1"/>
</dbReference>
<dbReference type="InterPro" id="IPR000860">
    <property type="entry name" value="HemC"/>
</dbReference>
<dbReference type="InterPro" id="IPR022419">
    <property type="entry name" value="Porphobilin_deaminase_cofac_BS"/>
</dbReference>
<dbReference type="InterPro" id="IPR022417">
    <property type="entry name" value="Porphobilin_deaminase_N"/>
</dbReference>
<dbReference type="InterPro" id="IPR022418">
    <property type="entry name" value="Porphobilinogen_deaminase_C"/>
</dbReference>
<dbReference type="InterPro" id="IPR036803">
    <property type="entry name" value="Porphobilinogen_deaminase_C_sf"/>
</dbReference>
<dbReference type="NCBIfam" id="TIGR00212">
    <property type="entry name" value="hemC"/>
    <property type="match status" value="1"/>
</dbReference>
<dbReference type="PANTHER" id="PTHR11557">
    <property type="entry name" value="PORPHOBILINOGEN DEAMINASE"/>
    <property type="match status" value="1"/>
</dbReference>
<dbReference type="PANTHER" id="PTHR11557:SF0">
    <property type="entry name" value="PORPHOBILINOGEN DEAMINASE"/>
    <property type="match status" value="1"/>
</dbReference>
<dbReference type="Pfam" id="PF01379">
    <property type="entry name" value="Porphobil_deam"/>
    <property type="match status" value="1"/>
</dbReference>
<dbReference type="Pfam" id="PF03900">
    <property type="entry name" value="Porphobil_deamC"/>
    <property type="match status" value="1"/>
</dbReference>
<dbReference type="PIRSF" id="PIRSF001438">
    <property type="entry name" value="4pyrrol_synth_OHMeBilane_synth"/>
    <property type="match status" value="1"/>
</dbReference>
<dbReference type="PRINTS" id="PR00151">
    <property type="entry name" value="PORPHBDMNASE"/>
</dbReference>
<dbReference type="SUPFAM" id="SSF53850">
    <property type="entry name" value="Periplasmic binding protein-like II"/>
    <property type="match status" value="1"/>
</dbReference>
<dbReference type="SUPFAM" id="SSF54782">
    <property type="entry name" value="Porphobilinogen deaminase (hydroxymethylbilane synthase), C-terminal domain"/>
    <property type="match status" value="1"/>
</dbReference>
<dbReference type="PROSITE" id="PS00533">
    <property type="entry name" value="PORPHOBILINOGEN_DEAM"/>
    <property type="match status" value="1"/>
</dbReference>
<feature type="chain" id="PRO_0000142952" description="Porphobilinogen deaminase">
    <location>
        <begin position="1"/>
        <end position="309"/>
    </location>
</feature>
<feature type="modified residue" description="S-(dipyrrolylmethanemethyl)cysteine" evidence="1">
    <location>
        <position position="244"/>
    </location>
</feature>
<keyword id="KW-0627">Porphyrin biosynthesis</keyword>
<keyword id="KW-0808">Transferase</keyword>
<comment type="function">
    <text evidence="1">Tetrapolymerization of the monopyrrole PBG into the hydroxymethylbilane pre-uroporphyrinogen in several discrete steps.</text>
</comment>
<comment type="catalytic activity">
    <reaction evidence="1">
        <text>4 porphobilinogen + H2O = hydroxymethylbilane + 4 NH4(+)</text>
        <dbReference type="Rhea" id="RHEA:13185"/>
        <dbReference type="ChEBI" id="CHEBI:15377"/>
        <dbReference type="ChEBI" id="CHEBI:28938"/>
        <dbReference type="ChEBI" id="CHEBI:57845"/>
        <dbReference type="ChEBI" id="CHEBI:58126"/>
        <dbReference type="EC" id="2.5.1.61"/>
    </reaction>
</comment>
<comment type="cofactor">
    <cofactor evidence="1">
        <name>dipyrromethane</name>
        <dbReference type="ChEBI" id="CHEBI:60342"/>
    </cofactor>
    <text evidence="1">Binds 1 dipyrromethane group covalently.</text>
</comment>
<comment type="pathway">
    <text evidence="1">Porphyrin-containing compound metabolism; protoporphyrin-IX biosynthesis; coproporphyrinogen-III from 5-aminolevulinate: step 2/4.</text>
</comment>
<comment type="subunit">
    <text evidence="1">Monomer.</text>
</comment>
<comment type="miscellaneous">
    <text evidence="1">The porphobilinogen subunits are added to the dipyrromethane group.</text>
</comment>
<comment type="similarity">
    <text evidence="1">Belongs to the HMBS family.</text>
</comment>
<proteinExistence type="inferred from homology"/>
<accession>Q92BF8</accession>
<gene>
    <name evidence="1" type="primary">hemC</name>
    <name type="ordered locus">lin1591</name>
</gene>
<protein>
    <recommendedName>
        <fullName evidence="1">Porphobilinogen deaminase</fullName>
        <shortName evidence="1">PBG</shortName>
        <ecNumber evidence="1">2.5.1.61</ecNumber>
    </recommendedName>
    <alternativeName>
        <fullName evidence="1">Hydroxymethylbilane synthase</fullName>
        <shortName evidence="1">HMBS</shortName>
    </alternativeName>
    <alternativeName>
        <fullName evidence="1">Pre-uroporphyrinogen synthase</fullName>
    </alternativeName>
</protein>
<evidence type="ECO:0000255" key="1">
    <source>
        <dbReference type="HAMAP-Rule" id="MF_00260"/>
    </source>
</evidence>